<dbReference type="EMBL" id="AL123456">
    <property type="protein sequence ID" value="CCP45050.1"/>
    <property type="molecule type" value="Genomic_DNA"/>
</dbReference>
<dbReference type="PIR" id="A70730">
    <property type="entry name" value="A70730"/>
</dbReference>
<dbReference type="RefSeq" id="NP_216785.1">
    <property type="nucleotide sequence ID" value="NC_000962.3"/>
</dbReference>
<dbReference type="RefSeq" id="WP_003902155.1">
    <property type="nucleotide sequence ID" value="NZ_NVQJ01000008.1"/>
</dbReference>
<dbReference type="STRING" id="83332.Rv2269c"/>
<dbReference type="PaxDb" id="83332-Rv2269c"/>
<dbReference type="DNASU" id="887623"/>
<dbReference type="GeneID" id="887623"/>
<dbReference type="KEGG" id="mtu:Rv2269c"/>
<dbReference type="KEGG" id="mtv:RVBD_2269c"/>
<dbReference type="TubercuList" id="Rv2269c"/>
<dbReference type="InParanoid" id="P9WLF9"/>
<dbReference type="OrthoDB" id="9878280at2"/>
<dbReference type="Proteomes" id="UP000001584">
    <property type="component" value="Chromosome"/>
</dbReference>
<dbReference type="GO" id="GO:0042783">
    <property type="term" value="P:symbiont-mediated evasion of host immune response"/>
    <property type="evidence" value="ECO:0000315"/>
    <property type="project" value="MTBBASE"/>
</dbReference>
<proteinExistence type="evidence at transcript level"/>
<evidence type="ECO:0000269" key="1">
    <source>
    </source>
</evidence>
<gene>
    <name type="ordered locus">Rv2269c</name>
    <name type="ORF">MTCY339.41</name>
</gene>
<sequence length="110" mass="11697">MANDARPLARLANCRVGDQSSATHAYTVGPVLGVPPTGGVDLRYGGRAGIGRSETVTDHGAVGRRYHQPCAGQIRLSELRVTILLRCETLCETAQLLRCPPLPCDCSTPL</sequence>
<accession>P9WLF9</accession>
<accession>L0T9B6</accession>
<accession>P64965</accession>
<accession>Q50694</accession>
<protein>
    <recommendedName>
        <fullName>Uncharacterized protein Rv2269c</fullName>
    </recommendedName>
</protein>
<organism>
    <name type="scientific">Mycobacterium tuberculosis (strain ATCC 25618 / H37Rv)</name>
    <dbReference type="NCBI Taxonomy" id="83332"/>
    <lineage>
        <taxon>Bacteria</taxon>
        <taxon>Bacillati</taxon>
        <taxon>Actinomycetota</taxon>
        <taxon>Actinomycetes</taxon>
        <taxon>Mycobacteriales</taxon>
        <taxon>Mycobacteriaceae</taxon>
        <taxon>Mycobacterium</taxon>
        <taxon>Mycobacterium tuberculosis complex</taxon>
    </lineage>
</organism>
<reference key="1">
    <citation type="journal article" date="1998" name="Nature">
        <title>Deciphering the biology of Mycobacterium tuberculosis from the complete genome sequence.</title>
        <authorList>
            <person name="Cole S.T."/>
            <person name="Brosch R."/>
            <person name="Parkhill J."/>
            <person name="Garnier T."/>
            <person name="Churcher C.M."/>
            <person name="Harris D.E."/>
            <person name="Gordon S.V."/>
            <person name="Eiglmeier K."/>
            <person name="Gas S."/>
            <person name="Barry C.E. III"/>
            <person name="Tekaia F."/>
            <person name="Badcock K."/>
            <person name="Basham D."/>
            <person name="Brown D."/>
            <person name="Chillingworth T."/>
            <person name="Connor R."/>
            <person name="Davies R.M."/>
            <person name="Devlin K."/>
            <person name="Feltwell T."/>
            <person name="Gentles S."/>
            <person name="Hamlin N."/>
            <person name="Holroyd S."/>
            <person name="Hornsby T."/>
            <person name="Jagels K."/>
            <person name="Krogh A."/>
            <person name="McLean J."/>
            <person name="Moule S."/>
            <person name="Murphy L.D."/>
            <person name="Oliver S."/>
            <person name="Osborne J."/>
            <person name="Quail M.A."/>
            <person name="Rajandream M.A."/>
            <person name="Rogers J."/>
            <person name="Rutter S."/>
            <person name="Seeger K."/>
            <person name="Skelton S."/>
            <person name="Squares S."/>
            <person name="Squares R."/>
            <person name="Sulston J.E."/>
            <person name="Taylor K."/>
            <person name="Whitehead S."/>
            <person name="Barrell B.G."/>
        </authorList>
    </citation>
    <scope>NUCLEOTIDE SEQUENCE [LARGE SCALE GENOMIC DNA]</scope>
    <source>
        <strain>ATCC 25618 / H37Rv</strain>
    </source>
</reference>
<reference key="2">
    <citation type="journal article" date="2016" name="ACS Infect. Dis.">
        <title>Biosynthesis and regulation of sulfomenaquinone, a metabolite associated with virulence in Mycobacterium tuberculosis.</title>
        <authorList>
            <person name="Sogi K.M."/>
            <person name="Holsclaw C.M."/>
            <person name="Fragiadakis G.K."/>
            <person name="Nomura D.K."/>
            <person name="Leary J.A."/>
            <person name="Bertozzi C.R."/>
        </authorList>
    </citation>
    <scope>PRELIMINARY FUNCTION</scope>
    <scope>INDUCTION</scope>
    <scope>DISRUPTION PHENOTYPE</scope>
    <source>
        <strain>H37Rv</strain>
    </source>
</reference>
<keyword id="KW-1185">Reference proteome</keyword>
<feature type="chain" id="PRO_0000103995" description="Uncharacterized protein Rv2269c">
    <location>
        <begin position="1"/>
        <end position="110"/>
    </location>
</feature>
<comment type="function">
    <text evidence="1">May play a regulatory role in sulfomenaquinone (SMK) biosynthesis (PubMed:27933784). Not essential for SMK biosynthesis (PubMed:27933784).</text>
</comment>
<comment type="induction">
    <text evidence="1">Part of an operon that includes stf3 and cyp128, which are required for the production of SMK.</text>
</comment>
<comment type="disruption phenotype">
    <text evidence="1">Deletion mutant shows increased production of SMK.</text>
</comment>
<name>Y2269_MYCTU</name>